<dbReference type="EC" id="3.1.3.11"/>
<dbReference type="EMBL" id="U20179">
    <property type="protein sequence ID" value="AAA82750.1"/>
    <property type="molecule type" value="mRNA"/>
</dbReference>
<dbReference type="PIR" id="T07853">
    <property type="entry name" value="T07853"/>
</dbReference>
<dbReference type="RefSeq" id="NP_001302604.1">
    <property type="nucleotide sequence ID" value="NM_001315675.1"/>
</dbReference>
<dbReference type="SMR" id="P46267"/>
<dbReference type="GeneID" id="106401056"/>
<dbReference type="KEGG" id="bna:106401056"/>
<dbReference type="OrthoDB" id="10256725at2759"/>
<dbReference type="BRENDA" id="3.1.3.11">
    <property type="organism ID" value="944"/>
</dbReference>
<dbReference type="GO" id="GO:0005737">
    <property type="term" value="C:cytoplasm"/>
    <property type="evidence" value="ECO:0007669"/>
    <property type="project" value="UniProtKB-SubCell"/>
</dbReference>
<dbReference type="GO" id="GO:0042132">
    <property type="term" value="F:fructose 1,6-bisphosphate 1-phosphatase activity"/>
    <property type="evidence" value="ECO:0007669"/>
    <property type="project" value="UniProtKB-EC"/>
</dbReference>
<dbReference type="GO" id="GO:0046872">
    <property type="term" value="F:metal ion binding"/>
    <property type="evidence" value="ECO:0007669"/>
    <property type="project" value="UniProtKB-KW"/>
</dbReference>
<dbReference type="GO" id="GO:0005975">
    <property type="term" value="P:carbohydrate metabolic process"/>
    <property type="evidence" value="ECO:0007669"/>
    <property type="project" value="InterPro"/>
</dbReference>
<dbReference type="CDD" id="cd00354">
    <property type="entry name" value="FBPase"/>
    <property type="match status" value="1"/>
</dbReference>
<dbReference type="FunFam" id="3.40.190.80:FF:000001">
    <property type="entry name" value="Fructose-1,6-bisphosphatase class 1"/>
    <property type="match status" value="1"/>
</dbReference>
<dbReference type="FunFam" id="3.30.540.10:FF:000008">
    <property type="entry name" value="Fructose-1,6-bisphosphatase, cytosolic"/>
    <property type="match status" value="1"/>
</dbReference>
<dbReference type="Gene3D" id="3.40.190.80">
    <property type="match status" value="1"/>
</dbReference>
<dbReference type="Gene3D" id="3.30.540.10">
    <property type="entry name" value="Fructose-1,6-Bisphosphatase, subunit A, domain 1"/>
    <property type="match status" value="1"/>
</dbReference>
<dbReference type="HAMAP" id="MF_01855">
    <property type="entry name" value="FBPase_class1"/>
    <property type="match status" value="1"/>
</dbReference>
<dbReference type="InterPro" id="IPR044015">
    <property type="entry name" value="FBPase_C_dom"/>
</dbReference>
<dbReference type="InterPro" id="IPR000146">
    <property type="entry name" value="FBPase_class-1"/>
</dbReference>
<dbReference type="InterPro" id="IPR033391">
    <property type="entry name" value="FBPase_N"/>
</dbReference>
<dbReference type="InterPro" id="IPR028343">
    <property type="entry name" value="FBPtase"/>
</dbReference>
<dbReference type="InterPro" id="IPR020548">
    <property type="entry name" value="Fructose_bisphosphatase_AS"/>
</dbReference>
<dbReference type="NCBIfam" id="NF006778">
    <property type="entry name" value="PRK09293.1-1"/>
    <property type="match status" value="1"/>
</dbReference>
<dbReference type="NCBIfam" id="NF006779">
    <property type="entry name" value="PRK09293.1-3"/>
    <property type="match status" value="1"/>
</dbReference>
<dbReference type="PANTHER" id="PTHR11556:SF41">
    <property type="entry name" value="FRUCTOSE-1,6-BISPHOSPHATASE, CYTOSOLIC"/>
    <property type="match status" value="1"/>
</dbReference>
<dbReference type="PANTHER" id="PTHR11556">
    <property type="entry name" value="FRUCTOSE-1,6-BISPHOSPHATASE-RELATED"/>
    <property type="match status" value="1"/>
</dbReference>
<dbReference type="Pfam" id="PF00316">
    <property type="entry name" value="FBPase"/>
    <property type="match status" value="1"/>
</dbReference>
<dbReference type="Pfam" id="PF18913">
    <property type="entry name" value="FBPase_C"/>
    <property type="match status" value="1"/>
</dbReference>
<dbReference type="PIRSF" id="PIRSF500210">
    <property type="entry name" value="FBPtase"/>
    <property type="match status" value="1"/>
</dbReference>
<dbReference type="PIRSF" id="PIRSF000904">
    <property type="entry name" value="FBPtase_SBPase"/>
    <property type="match status" value="1"/>
</dbReference>
<dbReference type="PRINTS" id="PR00115">
    <property type="entry name" value="F16BPHPHTASE"/>
</dbReference>
<dbReference type="SUPFAM" id="SSF56655">
    <property type="entry name" value="Carbohydrate phosphatase"/>
    <property type="match status" value="1"/>
</dbReference>
<dbReference type="PROSITE" id="PS00124">
    <property type="entry name" value="FBPASE"/>
    <property type="match status" value="1"/>
</dbReference>
<reference key="1">
    <citation type="journal article" date="1995" name="Plant Physiol.">
        <title>Isolation and characterization of an oilseed rape fructose-1,6-bisphosphatase cDNA.</title>
        <authorList>
            <person name="Laroche A."/>
            <person name="Frick M.M."/>
            <person name="Kazala C."/>
            <person name="Weselake R.J."/>
            <person name="Thomas J.E."/>
        </authorList>
    </citation>
    <scope>NUCLEOTIDE SEQUENCE [MRNA]</scope>
    <source>
        <tissue>Cotyledon</tissue>
    </source>
</reference>
<comment type="catalytic activity">
    <reaction>
        <text>beta-D-fructose 1,6-bisphosphate + H2O = beta-D-fructose 6-phosphate + phosphate</text>
        <dbReference type="Rhea" id="RHEA:11064"/>
        <dbReference type="ChEBI" id="CHEBI:15377"/>
        <dbReference type="ChEBI" id="CHEBI:32966"/>
        <dbReference type="ChEBI" id="CHEBI:43474"/>
        <dbReference type="ChEBI" id="CHEBI:57634"/>
        <dbReference type="EC" id="3.1.3.11"/>
    </reaction>
</comment>
<comment type="cofactor">
    <cofactor evidence="1">
        <name>Mg(2+)</name>
        <dbReference type="ChEBI" id="CHEBI:18420"/>
    </cofactor>
    <text evidence="1">Binds 3 Mg(2+) ions per subunit.</text>
</comment>
<comment type="subcellular location">
    <subcellularLocation>
        <location>Cytoplasm</location>
    </subcellularLocation>
</comment>
<comment type="miscellaneous">
    <text>In plants there are two FBPase isozymes: one in the cytosol and the other in the chloroplast.</text>
</comment>
<comment type="similarity">
    <text evidence="2">Belongs to the FBPase class 1 family.</text>
</comment>
<keyword id="KW-0119">Carbohydrate metabolism</keyword>
<keyword id="KW-0963">Cytoplasm</keyword>
<keyword id="KW-0378">Hydrolase</keyword>
<keyword id="KW-0460">Magnesium</keyword>
<keyword id="KW-0479">Metal-binding</keyword>
<sequence length="339" mass="37156">MDHEADAFRDLMTITRFVLNEQSKYPESRGDFTILLSNIVLGCKFVCSAVNKAGLAKLIGLAGDTNIQGEEQKKLDVLSNDVFVKALVSSGRTSVLVSEEDEEATFVESSKCGKYCVVFDPLDGSSNIDCGVSIGTIFGIYTMEHSDEPTTKDVLKPGNEMVAAGYCMYGSSCMLVLSTGTGVHGFTLDPSLGEFILTHPDIKIPKKGNIYSVNEGNAQNWDGPTTKYVERCKYPKDGSPAKSLRYVGSMVADVHRTLLYGGIFLYPADKKSPNGKLRVLYEVFPMAFLMEQAGGQAFTGKKRALDLVPKKIHERSPIFLGSYDDVEEIKALYAEEEKN</sequence>
<feature type="chain" id="PRO_0000200514" description="Fructose-1,6-bisphosphatase, cytosolic">
    <location>
        <begin position="1"/>
        <end position="339"/>
    </location>
</feature>
<feature type="binding site" evidence="1">
    <location>
        <position position="70"/>
    </location>
    <ligand>
        <name>Mg(2+)</name>
        <dbReference type="ChEBI" id="CHEBI:18420"/>
        <label>1</label>
    </ligand>
</feature>
<feature type="binding site" evidence="1">
    <location>
        <position position="99"/>
    </location>
    <ligand>
        <name>Mg(2+)</name>
        <dbReference type="ChEBI" id="CHEBI:18420"/>
        <label>1</label>
    </ligand>
</feature>
<feature type="binding site" evidence="1">
    <location>
        <position position="99"/>
    </location>
    <ligand>
        <name>Mg(2+)</name>
        <dbReference type="ChEBI" id="CHEBI:18420"/>
        <label>2</label>
    </ligand>
</feature>
<feature type="binding site" evidence="1">
    <location>
        <position position="120"/>
    </location>
    <ligand>
        <name>Mg(2+)</name>
        <dbReference type="ChEBI" id="CHEBI:18420"/>
        <label>2</label>
    </ligand>
</feature>
<feature type="binding site" evidence="1">
    <location>
        <position position="120"/>
    </location>
    <ligand>
        <name>Mg(2+)</name>
        <dbReference type="ChEBI" id="CHEBI:18420"/>
        <label>3</label>
    </ligand>
</feature>
<feature type="binding site" evidence="1">
    <location>
        <position position="122"/>
    </location>
    <ligand>
        <name>Mg(2+)</name>
        <dbReference type="ChEBI" id="CHEBI:18420"/>
        <label>2</label>
    </ligand>
</feature>
<feature type="binding site" evidence="1">
    <location>
        <begin position="123"/>
        <end position="126"/>
    </location>
    <ligand>
        <name>substrate</name>
    </ligand>
</feature>
<feature type="binding site" evidence="1">
    <location>
        <position position="123"/>
    </location>
    <ligand>
        <name>Mg(2+)</name>
        <dbReference type="ChEBI" id="CHEBI:18420"/>
        <label>3</label>
    </ligand>
</feature>
<feature type="binding site" evidence="1">
    <location>
        <position position="214"/>
    </location>
    <ligand>
        <name>substrate</name>
    </ligand>
</feature>
<feature type="binding site" evidence="1">
    <location>
        <position position="246"/>
    </location>
    <ligand>
        <name>substrate</name>
    </ligand>
</feature>
<feature type="binding site" evidence="1">
    <location>
        <position position="266"/>
    </location>
    <ligand>
        <name>substrate</name>
    </ligand>
</feature>
<feature type="binding site" evidence="1">
    <location>
        <position position="276"/>
    </location>
    <ligand>
        <name>substrate</name>
    </ligand>
</feature>
<feature type="binding site" evidence="1">
    <location>
        <position position="282"/>
    </location>
    <ligand>
        <name>Mg(2+)</name>
        <dbReference type="ChEBI" id="CHEBI:18420"/>
        <label>3</label>
    </ligand>
</feature>
<evidence type="ECO:0000250" key="1"/>
<evidence type="ECO:0000305" key="2"/>
<accession>P46267</accession>
<protein>
    <recommendedName>
        <fullName>Fructose-1,6-bisphosphatase, cytosolic</fullName>
        <shortName>FBPase</shortName>
        <ecNumber>3.1.3.11</ecNumber>
    </recommendedName>
    <alternativeName>
        <fullName>D-fructose-1,6-bisphosphate 1-phosphohydrolase</fullName>
    </alternativeName>
</protein>
<name>F16P2_BRANA</name>
<organism>
    <name type="scientific">Brassica napus</name>
    <name type="common">Rape</name>
    <dbReference type="NCBI Taxonomy" id="3708"/>
    <lineage>
        <taxon>Eukaryota</taxon>
        <taxon>Viridiplantae</taxon>
        <taxon>Streptophyta</taxon>
        <taxon>Embryophyta</taxon>
        <taxon>Tracheophyta</taxon>
        <taxon>Spermatophyta</taxon>
        <taxon>Magnoliopsida</taxon>
        <taxon>eudicotyledons</taxon>
        <taxon>Gunneridae</taxon>
        <taxon>Pentapetalae</taxon>
        <taxon>rosids</taxon>
        <taxon>malvids</taxon>
        <taxon>Brassicales</taxon>
        <taxon>Brassicaceae</taxon>
        <taxon>Brassiceae</taxon>
        <taxon>Brassica</taxon>
    </lineage>
</organism>
<proteinExistence type="evidence at transcript level"/>